<evidence type="ECO:0000255" key="1">
    <source>
        <dbReference type="HAMAP-Rule" id="MF_00244"/>
    </source>
</evidence>
<reference key="1">
    <citation type="journal article" date="2014" name="Genome Announc.">
        <title>Complete Genome Sequence of the Extreme Thermophile Dictyoglomus thermophilum H-6-12.</title>
        <authorList>
            <person name="Coil D.A."/>
            <person name="Badger J.H."/>
            <person name="Forberger H.C."/>
            <person name="Riggs F."/>
            <person name="Madupu R."/>
            <person name="Fedorova N."/>
            <person name="Ward N."/>
            <person name="Robb F.T."/>
            <person name="Eisen J.A."/>
        </authorList>
    </citation>
    <scope>NUCLEOTIDE SEQUENCE [LARGE SCALE GENOMIC DNA]</scope>
    <source>
        <strain>ATCC 35947 / DSM 3960 / H-6-12</strain>
    </source>
</reference>
<name>NADD_DICT6</name>
<organism>
    <name type="scientific">Dictyoglomus thermophilum (strain ATCC 35947 / DSM 3960 / H-6-12)</name>
    <dbReference type="NCBI Taxonomy" id="309799"/>
    <lineage>
        <taxon>Bacteria</taxon>
        <taxon>Pseudomonadati</taxon>
        <taxon>Dictyoglomota</taxon>
        <taxon>Dictyoglomia</taxon>
        <taxon>Dictyoglomales</taxon>
        <taxon>Dictyoglomaceae</taxon>
        <taxon>Dictyoglomus</taxon>
    </lineage>
</organism>
<sequence length="195" mass="22931">MKIGILGGTFDPIHYGHLWFAEYARERFKLDKVFFIPNKIPPHRETPLATSKQRYEMVLLATLSNPCFEVLPIELEREGISYMVDTIRDLSSCFSFDELYLLLGNDAFRDFLKWKEPYKIIEKASIIVGSRGIEDYSSDLKNFIKNFENKIFFLDFPYYPISAKEIRERVKRGLSIKYLVPESVEDYIIKNGIYL</sequence>
<protein>
    <recommendedName>
        <fullName evidence="1">Probable nicotinate-nucleotide adenylyltransferase</fullName>
        <ecNumber evidence="1">2.7.7.18</ecNumber>
    </recommendedName>
    <alternativeName>
        <fullName evidence="1">Deamido-NAD(+) diphosphorylase</fullName>
    </alternativeName>
    <alternativeName>
        <fullName evidence="1">Deamido-NAD(+) pyrophosphorylase</fullName>
    </alternativeName>
    <alternativeName>
        <fullName evidence="1">Nicotinate mononucleotide adenylyltransferase</fullName>
        <shortName evidence="1">NaMN adenylyltransferase</shortName>
    </alternativeName>
</protein>
<accession>B5YEQ0</accession>
<gene>
    <name evidence="1" type="primary">nadD</name>
    <name type="ordered locus">DICTH_1174</name>
</gene>
<comment type="function">
    <text evidence="1">Catalyzes the reversible adenylation of nicotinate mononucleotide (NaMN) to nicotinic acid adenine dinucleotide (NaAD).</text>
</comment>
<comment type="catalytic activity">
    <reaction evidence="1">
        <text>nicotinate beta-D-ribonucleotide + ATP + H(+) = deamido-NAD(+) + diphosphate</text>
        <dbReference type="Rhea" id="RHEA:22860"/>
        <dbReference type="ChEBI" id="CHEBI:15378"/>
        <dbReference type="ChEBI" id="CHEBI:30616"/>
        <dbReference type="ChEBI" id="CHEBI:33019"/>
        <dbReference type="ChEBI" id="CHEBI:57502"/>
        <dbReference type="ChEBI" id="CHEBI:58437"/>
        <dbReference type="EC" id="2.7.7.18"/>
    </reaction>
</comment>
<comment type="pathway">
    <text evidence="1">Cofactor biosynthesis; NAD(+) biosynthesis; deamido-NAD(+) from nicotinate D-ribonucleotide: step 1/1.</text>
</comment>
<comment type="similarity">
    <text evidence="1">Belongs to the NadD family.</text>
</comment>
<feature type="chain" id="PRO_1000100773" description="Probable nicotinate-nucleotide adenylyltransferase">
    <location>
        <begin position="1"/>
        <end position="195"/>
    </location>
</feature>
<proteinExistence type="inferred from homology"/>
<dbReference type="EC" id="2.7.7.18" evidence="1"/>
<dbReference type="EMBL" id="CP001146">
    <property type="protein sequence ID" value="ACI18343.1"/>
    <property type="molecule type" value="Genomic_DNA"/>
</dbReference>
<dbReference type="RefSeq" id="WP_012546975.1">
    <property type="nucleotide sequence ID" value="NC_011297.1"/>
</dbReference>
<dbReference type="SMR" id="B5YEQ0"/>
<dbReference type="STRING" id="309799.DICTH_1174"/>
<dbReference type="PaxDb" id="309799-DICTH_1174"/>
<dbReference type="KEGG" id="dth:DICTH_1174"/>
<dbReference type="eggNOG" id="COG1057">
    <property type="taxonomic scope" value="Bacteria"/>
</dbReference>
<dbReference type="HOGENOM" id="CLU_069765_3_1_0"/>
<dbReference type="OrthoDB" id="5295945at2"/>
<dbReference type="UniPathway" id="UPA00253">
    <property type="reaction ID" value="UER00332"/>
</dbReference>
<dbReference type="Proteomes" id="UP000001733">
    <property type="component" value="Chromosome"/>
</dbReference>
<dbReference type="GO" id="GO:0005524">
    <property type="term" value="F:ATP binding"/>
    <property type="evidence" value="ECO:0007669"/>
    <property type="project" value="UniProtKB-KW"/>
</dbReference>
<dbReference type="GO" id="GO:0004515">
    <property type="term" value="F:nicotinate-nucleotide adenylyltransferase activity"/>
    <property type="evidence" value="ECO:0007669"/>
    <property type="project" value="UniProtKB-UniRule"/>
</dbReference>
<dbReference type="GO" id="GO:0009435">
    <property type="term" value="P:NAD biosynthetic process"/>
    <property type="evidence" value="ECO:0007669"/>
    <property type="project" value="UniProtKB-UniRule"/>
</dbReference>
<dbReference type="CDD" id="cd02165">
    <property type="entry name" value="NMNAT"/>
    <property type="match status" value="1"/>
</dbReference>
<dbReference type="FunFam" id="3.40.50.620:FF:000251">
    <property type="entry name" value="Probable nicotinate-nucleotide adenylyltransferase"/>
    <property type="match status" value="1"/>
</dbReference>
<dbReference type="Gene3D" id="3.40.50.620">
    <property type="entry name" value="HUPs"/>
    <property type="match status" value="1"/>
</dbReference>
<dbReference type="HAMAP" id="MF_00244">
    <property type="entry name" value="NaMN_adenylyltr"/>
    <property type="match status" value="1"/>
</dbReference>
<dbReference type="InterPro" id="IPR004821">
    <property type="entry name" value="Cyt_trans-like"/>
</dbReference>
<dbReference type="InterPro" id="IPR005248">
    <property type="entry name" value="NadD/NMNAT"/>
</dbReference>
<dbReference type="InterPro" id="IPR014729">
    <property type="entry name" value="Rossmann-like_a/b/a_fold"/>
</dbReference>
<dbReference type="NCBIfam" id="TIGR00125">
    <property type="entry name" value="cyt_tran_rel"/>
    <property type="match status" value="1"/>
</dbReference>
<dbReference type="NCBIfam" id="TIGR00482">
    <property type="entry name" value="nicotinate (nicotinamide) nucleotide adenylyltransferase"/>
    <property type="match status" value="1"/>
</dbReference>
<dbReference type="NCBIfam" id="NF000840">
    <property type="entry name" value="PRK00071.1-3"/>
    <property type="match status" value="1"/>
</dbReference>
<dbReference type="PANTHER" id="PTHR39321">
    <property type="entry name" value="NICOTINATE-NUCLEOTIDE ADENYLYLTRANSFERASE-RELATED"/>
    <property type="match status" value="1"/>
</dbReference>
<dbReference type="PANTHER" id="PTHR39321:SF3">
    <property type="entry name" value="PHOSPHOPANTETHEINE ADENYLYLTRANSFERASE"/>
    <property type="match status" value="1"/>
</dbReference>
<dbReference type="Pfam" id="PF01467">
    <property type="entry name" value="CTP_transf_like"/>
    <property type="match status" value="1"/>
</dbReference>
<dbReference type="SUPFAM" id="SSF52374">
    <property type="entry name" value="Nucleotidylyl transferase"/>
    <property type="match status" value="1"/>
</dbReference>
<keyword id="KW-0067">ATP-binding</keyword>
<keyword id="KW-0520">NAD</keyword>
<keyword id="KW-0547">Nucleotide-binding</keyword>
<keyword id="KW-0548">Nucleotidyltransferase</keyword>
<keyword id="KW-0662">Pyridine nucleotide biosynthesis</keyword>
<keyword id="KW-0808">Transferase</keyword>